<proteinExistence type="evidence at protein level"/>
<dbReference type="EMBL" id="LN714499">
    <property type="protein sequence ID" value="CEL75584.1"/>
    <property type="molecule type" value="Genomic_DNA"/>
</dbReference>
<dbReference type="EMBL" id="AAYL02000098">
    <property type="protein sequence ID" value="ESS33502.1"/>
    <property type="molecule type" value="Genomic_DNA"/>
</dbReference>
<dbReference type="SMR" id="B9Q1V7"/>
<dbReference type="STRING" id="432359.B9Q1V7"/>
<dbReference type="PaxDb" id="5811-TGME49_066800"/>
<dbReference type="EnsemblProtists" id="ESS33502">
    <property type="protein sequence ID" value="ESS33502"/>
    <property type="gene ID" value="TGVEG_266800"/>
</dbReference>
<dbReference type="VEuPathDB" id="ToxoDB:TGVEG_266800"/>
<dbReference type="eggNOG" id="KOG4473">
    <property type="taxonomic scope" value="Eukaryota"/>
</dbReference>
<dbReference type="OMA" id="SRIGWLR"/>
<dbReference type="OrthoDB" id="696at5809"/>
<dbReference type="Proteomes" id="UP000002226">
    <property type="component" value="Partially assembled WGS sequence"/>
</dbReference>
<dbReference type="GO" id="GO:0005774">
    <property type="term" value="C:vacuolar membrane"/>
    <property type="evidence" value="ECO:0007669"/>
    <property type="project" value="UniProtKB-SubCell"/>
</dbReference>
<dbReference type="GO" id="GO:0005384">
    <property type="term" value="F:manganese ion transmembrane transporter activity"/>
    <property type="evidence" value="ECO:0007669"/>
    <property type="project" value="InterPro"/>
</dbReference>
<dbReference type="GO" id="GO:0046872">
    <property type="term" value="F:metal ion binding"/>
    <property type="evidence" value="ECO:0007669"/>
    <property type="project" value="UniProtKB-KW"/>
</dbReference>
<dbReference type="GO" id="GO:0030026">
    <property type="term" value="P:intracellular manganese ion homeostasis"/>
    <property type="evidence" value="ECO:0007669"/>
    <property type="project" value="InterPro"/>
</dbReference>
<dbReference type="GO" id="GO:0006826">
    <property type="term" value="P:iron ion transport"/>
    <property type="evidence" value="ECO:0007669"/>
    <property type="project" value="UniProtKB-KW"/>
</dbReference>
<dbReference type="CDD" id="cd02434">
    <property type="entry name" value="Nodulin-21_like_3"/>
    <property type="match status" value="1"/>
</dbReference>
<dbReference type="InterPro" id="IPR008217">
    <property type="entry name" value="Ccc1_fam"/>
</dbReference>
<dbReference type="PANTHER" id="PTHR31851">
    <property type="entry name" value="FE(2+)/MN(2+) TRANSPORTER PCL1"/>
    <property type="match status" value="1"/>
</dbReference>
<dbReference type="Pfam" id="PF01988">
    <property type="entry name" value="VIT1"/>
    <property type="match status" value="1"/>
</dbReference>
<accession>B9Q1V7</accession>
<accession>A0A0F7UZI1</accession>
<accession>A0A0N5E9K8</accession>
<accession>B6KL85</accession>
<accession>B9QPC5</accession>
<accession>S7VVL2</accession>
<accession>S8GGP2</accession>
<comment type="function">
    <text evidence="3">Vacuolar iron transporter involved in the transfer of iron ions from the cytosol to the vacuole for intracellular iron storage (PubMed:37339985). Plays an essential role in detoxification of excess iron (PubMed:37339985). Important for parasite survival within macrophages and parasite virulence in vivo (PubMed:37339985).</text>
</comment>
<comment type="catalytic activity">
    <reaction evidence="3">
        <text>Fe(2+)(in) = Fe(2+)(out)</text>
        <dbReference type="Rhea" id="RHEA:28486"/>
        <dbReference type="ChEBI" id="CHEBI:29033"/>
    </reaction>
</comment>
<comment type="subcellular location">
    <subcellularLocation>
        <location evidence="3">Vacuole membrane</location>
        <topology evidence="2">Multi-pass membrane protein</topology>
    </subcellularLocation>
    <text evidence="3">Localization is dynamic through the lytic cycle. Expressed as a single point in extracellular parasites and within an hour post invasion (hpi). This point starts to fragment between 1-6 hpi and by 24 hpi the signal is seen in multiple small structures throughout the cytoplasm of the parasite (PubMed:37339985). Changes in iron levels alter the number of protein foci per parasite (PubMed:37339985).</text>
</comment>
<comment type="induction">
    <text evidence="3">Down-regulated upon treatment with excess iron or iron depletion (at protein level) (PubMed:37339985). Transcript levels are down-regulated by excess iron and do not change in case of iron removal (PubMed:37339985).</text>
</comment>
<comment type="disruption phenotype">
    <text evidence="3">Mild growth defects in cultured parasites under normal conditions and more prominent defects in replication in an iron-depleted environment (PubMed:37339985). Lower number of parasites per parasitophorous vacuole (PubMed:37339985). Accumulation of less iron and/or altered distribution of iron within parasite cells (PubMed:37339985). Parasites are more susceptible to iron and cadmium overload (PubMed:37339985). Parasites have lower cellular iron levels and increased catalase activity (PubMed:37339985). Iron overload leads to reactive oxygen species (ROS) accumulation (PubMed:37339985). Decreased survival of parasites within macrophages and decreased virulence in a mouse model (PubMed:37339985). Changes in transcription of genes from the pathways known to require iron such as iron-sulfur cluster biogenesis and heme biosynthesis pathways (PubMed:37339985). No differences in extracellular survival of parasites in culture (PubMed:37339985). No differences in sensitivity to zinc, copper and manganese (PubMed:37339985). No differences in sensitivity to sodium arsenite treatment, which induces oxidative stress (PubMed:37339985).</text>
</comment>
<comment type="similarity">
    <text evidence="5">Belongs to the CCC1 family.</text>
</comment>
<name>VIT_TOXGV</name>
<gene>
    <name evidence="4" type="primary">VIT</name>
    <name evidence="6" type="ORF">BN1205_086210</name>
    <name evidence="7" type="ORF">TGVEG_266800</name>
</gene>
<reference evidence="6" key="1">
    <citation type="journal article" date="2015" name="PLoS ONE">
        <title>Comprehensive Evaluation of Toxoplasma gondii VEG and Neospora caninum LIV Genomes with Tachyzoite Stage Transcriptome and Proteome Defines Novel Transcript Features.</title>
        <authorList>
            <person name="Ramaprasad A."/>
            <person name="Mourier T."/>
            <person name="Naeem R."/>
            <person name="Malas T.B."/>
            <person name="Moussa E."/>
            <person name="Panigrahi A."/>
            <person name="Vermont S.J."/>
            <person name="Otto T.D."/>
            <person name="Wastling J."/>
            <person name="Pain A."/>
        </authorList>
    </citation>
    <scope>NUCLEOTIDE SEQUENCE [LARGE SCALE GENOMIC DNA]</scope>
    <source>
        <strain evidence="6">ATCC 50861 / VEG</strain>
    </source>
</reference>
<reference evidence="8" key="2">
    <citation type="submission" date="2008-03" db="EMBL/GenBank/DDBJ databases">
        <title>Annotation of Toxoplasma gondii VEG.</title>
        <authorList>
            <person name="Lorenzi H."/>
            <person name="Inman J."/>
            <person name="Amedeo P."/>
            <person name="Brunk B."/>
            <person name="Roos D."/>
            <person name="Caler E."/>
        </authorList>
    </citation>
    <scope>NUCLEOTIDE SEQUENCE [LARGE SCALE GENOMIC DNA]</scope>
    <source>
        <strain evidence="8">ATCC 50861 / VEG</strain>
    </source>
</reference>
<reference evidence="5" key="3">
    <citation type="journal article" date="2023" name="Nat. Commun.">
        <title>The vacuolar iron transporter mediates iron detoxification in Toxoplasma gondii.</title>
        <authorList>
            <person name="Aghabi D."/>
            <person name="Sloan M."/>
            <person name="Gill G."/>
            <person name="Hartmann E."/>
            <person name="Antipova O."/>
            <person name="Dou Z."/>
            <person name="Guerra A.J."/>
            <person name="Carruthers V.B."/>
            <person name="Harding C.R."/>
        </authorList>
    </citation>
    <scope>FUNCTION</scope>
    <scope>TRANSPORTER ACTIVITY</scope>
    <scope>SUBCELLULAR LOCATION</scope>
    <scope>INDUCTION</scope>
    <scope>DISRUPTION PHENOTYPE</scope>
</reference>
<sequence>MPASGAGYAGGSIVPDGRTLVNCRDLHKARDAYQLRDIEATRAAHSLDLYRELTGDHKENHTNTSSDYVKAVVFGGLDGIVTIFAIVAGCVGADLSCSQVLMVGLGNLLADAISMGFGEYVSAAAEKDFVEAEKQREEWEVENCPEEEKREMVEIYTEKYGFSRADAQSMVDITFKYKKFFVQHMMVEELGLMYGFDEPTPIKRGLVMFTAFCFFGLLPLAGFIGWVAAFGLGAEADMAFLMACVVSIMTLFILGFSKGKFVGQNPTKSACLMAMNGGCAGTVAYGVGSLLQLVVGANLTAA</sequence>
<feature type="chain" id="PRO_0000459114" description="Vacuolar iron transporter">
    <location>
        <begin position="1"/>
        <end position="302"/>
    </location>
</feature>
<feature type="topological domain" description="Cytoplasmic" evidence="5">
    <location>
        <begin position="1"/>
        <end position="70"/>
    </location>
</feature>
<feature type="transmembrane region" description="Helical" evidence="2">
    <location>
        <begin position="71"/>
        <end position="91"/>
    </location>
</feature>
<feature type="topological domain" description="Vacuolar" evidence="5">
    <location>
        <begin position="92"/>
        <end position="99"/>
    </location>
</feature>
<feature type="transmembrane region" description="Helical" evidence="2">
    <location>
        <begin position="100"/>
        <end position="120"/>
    </location>
</feature>
<feature type="topological domain" description="Cytoplasmic" evidence="5">
    <location>
        <begin position="121"/>
        <end position="211"/>
    </location>
</feature>
<feature type="transmembrane region" description="Helical" evidence="2">
    <location>
        <begin position="212"/>
        <end position="232"/>
    </location>
</feature>
<feature type="topological domain" description="Vacuolar" evidence="5">
    <location>
        <begin position="233"/>
        <end position="235"/>
    </location>
</feature>
<feature type="transmembrane region" description="Helical" evidence="2">
    <location>
        <begin position="236"/>
        <end position="256"/>
    </location>
</feature>
<feature type="topological domain" description="Cytoplasmic" evidence="5">
    <location>
        <begin position="257"/>
        <end position="276"/>
    </location>
</feature>
<feature type="transmembrane region" description="Helical" evidence="2">
    <location>
        <begin position="277"/>
        <end position="297"/>
    </location>
</feature>
<feature type="topological domain" description="Vacuolar" evidence="5">
    <location>
        <begin position="298"/>
        <end position="302"/>
    </location>
</feature>
<feature type="binding site" evidence="1">
    <location>
        <position position="137"/>
    </location>
    <ligand>
        <name>Fe cation</name>
        <dbReference type="ChEBI" id="CHEBI:24875"/>
        <label>1</label>
    </ligand>
</feature>
<feature type="binding site" evidence="1">
    <location>
        <position position="137"/>
    </location>
    <ligand>
        <name>Fe cation</name>
        <dbReference type="ChEBI" id="CHEBI:24875"/>
        <label>2</label>
    </ligand>
</feature>
<feature type="binding site" evidence="1">
    <location>
        <position position="140"/>
    </location>
    <ligand>
        <name>Fe cation</name>
        <dbReference type="ChEBI" id="CHEBI:24875"/>
        <label>1</label>
    </ligand>
</feature>
<feature type="binding site" evidence="1">
    <location>
        <position position="140"/>
    </location>
    <ligand>
        <name>Fe cation</name>
        <dbReference type="ChEBI" id="CHEBI:24875"/>
        <label>3</label>
    </ligand>
</feature>
<feature type="binding site" evidence="1">
    <location>
        <position position="148"/>
    </location>
    <ligand>
        <name>Fe cation</name>
        <dbReference type="ChEBI" id="CHEBI:24875"/>
        <label>1</label>
    </ligand>
</feature>
<feature type="binding site" evidence="1">
    <location>
        <position position="148"/>
    </location>
    <ligand>
        <name>Fe cation</name>
        <dbReference type="ChEBI" id="CHEBI:24875"/>
        <label>2</label>
    </ligand>
</feature>
<feature type="binding site" evidence="1">
    <location>
        <position position="148"/>
    </location>
    <ligand>
        <name>Fe cation</name>
        <dbReference type="ChEBI" id="CHEBI:24875"/>
        <label>3</label>
    </ligand>
</feature>
<feature type="binding site" evidence="1">
    <location>
        <position position="151"/>
    </location>
    <ligand>
        <name>Fe cation</name>
        <dbReference type="ChEBI" id="CHEBI:24875"/>
        <label>1</label>
    </ligand>
</feature>
<feature type="binding site" evidence="1">
    <location>
        <position position="151"/>
    </location>
    <ligand>
        <name>Fe cation</name>
        <dbReference type="ChEBI" id="CHEBI:24875"/>
        <label>2</label>
    </ligand>
</feature>
<feature type="binding site" evidence="1">
    <location>
        <position position="151"/>
    </location>
    <ligand>
        <name>Fe cation</name>
        <dbReference type="ChEBI" id="CHEBI:24875"/>
        <label>3</label>
    </ligand>
</feature>
<feature type="binding site" evidence="1">
    <location>
        <position position="185"/>
    </location>
    <ligand>
        <name>Fe cation</name>
        <dbReference type="ChEBI" id="CHEBI:24875"/>
        <label>2</label>
    </ligand>
</feature>
<feature type="binding site" evidence="1">
    <location>
        <position position="189"/>
    </location>
    <ligand>
        <name>Fe cation</name>
        <dbReference type="ChEBI" id="CHEBI:24875"/>
        <label>1</label>
    </ligand>
</feature>
<protein>
    <recommendedName>
        <fullName evidence="4">Vacuolar iron transporter</fullName>
    </recommendedName>
</protein>
<organism evidence="8">
    <name type="scientific">Toxoplasma gondii (strain ATCC 50861 / VEG)</name>
    <dbReference type="NCBI Taxonomy" id="432359"/>
    <lineage>
        <taxon>Eukaryota</taxon>
        <taxon>Sar</taxon>
        <taxon>Alveolata</taxon>
        <taxon>Apicomplexa</taxon>
        <taxon>Conoidasida</taxon>
        <taxon>Coccidia</taxon>
        <taxon>Eucoccidiorida</taxon>
        <taxon>Eimeriorina</taxon>
        <taxon>Sarcocystidae</taxon>
        <taxon>Toxoplasma</taxon>
    </lineage>
</organism>
<keyword id="KW-0406">Ion transport</keyword>
<keyword id="KW-0408">Iron</keyword>
<keyword id="KW-0410">Iron transport</keyword>
<keyword id="KW-0472">Membrane</keyword>
<keyword id="KW-0479">Metal-binding</keyword>
<keyword id="KW-1185">Reference proteome</keyword>
<keyword id="KW-0812">Transmembrane</keyword>
<keyword id="KW-1133">Transmembrane helix</keyword>
<keyword id="KW-0813">Transport</keyword>
<keyword id="KW-0926">Vacuole</keyword>
<evidence type="ECO:0000250" key="1">
    <source>
        <dbReference type="UniProtKB" id="P0DO17"/>
    </source>
</evidence>
<evidence type="ECO:0000255" key="2"/>
<evidence type="ECO:0000269" key="3">
    <source>
    </source>
</evidence>
<evidence type="ECO:0000303" key="4">
    <source>
    </source>
</evidence>
<evidence type="ECO:0000305" key="5"/>
<evidence type="ECO:0000312" key="6">
    <source>
        <dbReference type="EMBL" id="CEL75584.1"/>
    </source>
</evidence>
<evidence type="ECO:0000312" key="7">
    <source>
        <dbReference type="EMBL" id="ESS33502.1"/>
    </source>
</evidence>
<evidence type="ECO:0000312" key="8">
    <source>
        <dbReference type="Proteomes" id="UP000002226"/>
    </source>
</evidence>